<reference key="1">
    <citation type="submission" date="2002-01" db="EMBL/GenBank/DDBJ databases">
        <title>Comparative analysis of human and primate complement C2 and factor B genes.</title>
        <authorList>
            <person name="Schneider P.M."/>
            <person name="Tantalaki E."/>
            <person name="Stradmann-Bellinghausen B."/>
            <person name="Rittner C."/>
        </authorList>
    </citation>
    <scope>NUCLEOTIDE SEQUENCE [GENOMIC DNA]</scope>
</reference>
<dbReference type="EC" id="3.4.21.47" evidence="1"/>
<dbReference type="EMBL" id="AY074664">
    <property type="protein sequence ID" value="AAM10005.1"/>
    <property type="molecule type" value="Genomic_DNA"/>
</dbReference>
<dbReference type="RefSeq" id="XP_004043760.1">
    <property type="nucleotide sequence ID" value="XM_004043712.2"/>
</dbReference>
<dbReference type="SMR" id="Q864V9"/>
<dbReference type="FunCoup" id="Q864V9">
    <property type="interactions" value="217"/>
</dbReference>
<dbReference type="STRING" id="9593.ENSGGOP00000027366"/>
<dbReference type="MEROPS" id="S01.196"/>
<dbReference type="GlyCosmos" id="Q864V9">
    <property type="glycosylation" value="4 sites, No reported glycans"/>
</dbReference>
<dbReference type="Ensembl" id="ENSGGOT00000002275.3">
    <property type="protein sequence ID" value="ENSGGOP00000002227.2"/>
    <property type="gene ID" value="ENSGGOG00000002254.3"/>
</dbReference>
<dbReference type="GeneID" id="101141641"/>
<dbReference type="KEGG" id="ggo:101141641"/>
<dbReference type="CTD" id="629"/>
<dbReference type="eggNOG" id="KOG3627">
    <property type="taxonomic scope" value="Eukaryota"/>
</dbReference>
<dbReference type="GeneTree" id="ENSGT00940000158605"/>
<dbReference type="HOGENOM" id="CLU_022004_1_0_1"/>
<dbReference type="InParanoid" id="Q864V9"/>
<dbReference type="Proteomes" id="UP000001519">
    <property type="component" value="Chromosome 6"/>
</dbReference>
<dbReference type="Bgee" id="ENSGGOG00000002254">
    <property type="expression patterns" value="Expressed in liver and 6 other cell types or tissues"/>
</dbReference>
<dbReference type="GO" id="GO:0005576">
    <property type="term" value="C:extracellular region"/>
    <property type="evidence" value="ECO:0007669"/>
    <property type="project" value="UniProtKB-SubCell"/>
</dbReference>
<dbReference type="GO" id="GO:0004252">
    <property type="term" value="F:serine-type endopeptidase activity"/>
    <property type="evidence" value="ECO:0007669"/>
    <property type="project" value="UniProtKB-EC"/>
</dbReference>
<dbReference type="GO" id="GO:0006956">
    <property type="term" value="P:complement activation"/>
    <property type="evidence" value="ECO:0000318"/>
    <property type="project" value="GO_Central"/>
</dbReference>
<dbReference type="GO" id="GO:0006957">
    <property type="term" value="P:complement activation, alternative pathway"/>
    <property type="evidence" value="ECO:0007669"/>
    <property type="project" value="UniProtKB-KW"/>
</dbReference>
<dbReference type="GO" id="GO:0006508">
    <property type="term" value="P:proteolysis"/>
    <property type="evidence" value="ECO:0007669"/>
    <property type="project" value="UniProtKB-KW"/>
</dbReference>
<dbReference type="GO" id="GO:0009617">
    <property type="term" value="P:response to bacterium"/>
    <property type="evidence" value="ECO:0000318"/>
    <property type="project" value="GO_Central"/>
</dbReference>
<dbReference type="CDD" id="cd00033">
    <property type="entry name" value="CCP"/>
    <property type="match status" value="3"/>
</dbReference>
<dbReference type="CDD" id="cd00190">
    <property type="entry name" value="Tryp_SPc"/>
    <property type="match status" value="1"/>
</dbReference>
<dbReference type="CDD" id="cd01470">
    <property type="entry name" value="vWA_complement_factors"/>
    <property type="match status" value="1"/>
</dbReference>
<dbReference type="FunFam" id="2.10.70.10:FF:000052">
    <property type="entry name" value="Complement factor B"/>
    <property type="match status" value="1"/>
</dbReference>
<dbReference type="FunFam" id="2.40.10.120:FF:000009">
    <property type="entry name" value="Complement factor B"/>
    <property type="match status" value="1"/>
</dbReference>
<dbReference type="FunFam" id="3.40.50.410:FF:000056">
    <property type="entry name" value="Complement factor B"/>
    <property type="match status" value="1"/>
</dbReference>
<dbReference type="FunFam" id="2.10.70.10:FF:000019">
    <property type="entry name" value="Complement factor b,-like"/>
    <property type="match status" value="2"/>
</dbReference>
<dbReference type="Gene3D" id="2.40.10.120">
    <property type="match status" value="1"/>
</dbReference>
<dbReference type="Gene3D" id="2.10.70.10">
    <property type="entry name" value="Complement Module, domain 1"/>
    <property type="match status" value="3"/>
</dbReference>
<dbReference type="Gene3D" id="3.40.50.410">
    <property type="entry name" value="von Willebrand factor, type A domain"/>
    <property type="match status" value="1"/>
</dbReference>
<dbReference type="InterPro" id="IPR011360">
    <property type="entry name" value="Compl_C2_B"/>
</dbReference>
<dbReference type="InterPro" id="IPR009003">
    <property type="entry name" value="Peptidase_S1_PA"/>
</dbReference>
<dbReference type="InterPro" id="IPR001314">
    <property type="entry name" value="Peptidase_S1A"/>
</dbReference>
<dbReference type="InterPro" id="IPR035976">
    <property type="entry name" value="Sushi/SCR/CCP_sf"/>
</dbReference>
<dbReference type="InterPro" id="IPR000436">
    <property type="entry name" value="Sushi_SCR_CCP_dom"/>
</dbReference>
<dbReference type="InterPro" id="IPR001254">
    <property type="entry name" value="Trypsin_dom"/>
</dbReference>
<dbReference type="InterPro" id="IPR018114">
    <property type="entry name" value="TRYPSIN_HIS"/>
</dbReference>
<dbReference type="InterPro" id="IPR033116">
    <property type="entry name" value="TRYPSIN_SER"/>
</dbReference>
<dbReference type="InterPro" id="IPR002035">
    <property type="entry name" value="VWF_A"/>
</dbReference>
<dbReference type="InterPro" id="IPR036465">
    <property type="entry name" value="vWFA_dom_sf"/>
</dbReference>
<dbReference type="PANTHER" id="PTHR46393:SF1">
    <property type="entry name" value="COMPLEMENT FACTOR B"/>
    <property type="match status" value="1"/>
</dbReference>
<dbReference type="PANTHER" id="PTHR46393">
    <property type="entry name" value="SUSHI DOMAIN-CONTAINING PROTEIN"/>
    <property type="match status" value="1"/>
</dbReference>
<dbReference type="Pfam" id="PF00084">
    <property type="entry name" value="Sushi"/>
    <property type="match status" value="3"/>
</dbReference>
<dbReference type="Pfam" id="PF00089">
    <property type="entry name" value="Trypsin"/>
    <property type="match status" value="1"/>
</dbReference>
<dbReference type="Pfam" id="PF00092">
    <property type="entry name" value="VWA"/>
    <property type="match status" value="1"/>
</dbReference>
<dbReference type="PIRSF" id="PIRSF001154">
    <property type="entry name" value="Compl_C2_B"/>
    <property type="match status" value="1"/>
</dbReference>
<dbReference type="PRINTS" id="PR00722">
    <property type="entry name" value="CHYMOTRYPSIN"/>
</dbReference>
<dbReference type="PRINTS" id="PR00453">
    <property type="entry name" value="VWFADOMAIN"/>
</dbReference>
<dbReference type="SMART" id="SM00032">
    <property type="entry name" value="CCP"/>
    <property type="match status" value="3"/>
</dbReference>
<dbReference type="SMART" id="SM00020">
    <property type="entry name" value="Tryp_SPc"/>
    <property type="match status" value="1"/>
</dbReference>
<dbReference type="SMART" id="SM00327">
    <property type="entry name" value="VWA"/>
    <property type="match status" value="1"/>
</dbReference>
<dbReference type="SUPFAM" id="SSF57535">
    <property type="entry name" value="Complement control module/SCR domain"/>
    <property type="match status" value="3"/>
</dbReference>
<dbReference type="SUPFAM" id="SSF50494">
    <property type="entry name" value="Trypsin-like serine proteases"/>
    <property type="match status" value="1"/>
</dbReference>
<dbReference type="SUPFAM" id="SSF53300">
    <property type="entry name" value="vWA-like"/>
    <property type="match status" value="1"/>
</dbReference>
<dbReference type="PROSITE" id="PS50923">
    <property type="entry name" value="SUSHI"/>
    <property type="match status" value="3"/>
</dbReference>
<dbReference type="PROSITE" id="PS50240">
    <property type="entry name" value="TRYPSIN_DOM"/>
    <property type="match status" value="1"/>
</dbReference>
<dbReference type="PROSITE" id="PS00134">
    <property type="entry name" value="TRYPSIN_HIS"/>
    <property type="match status" value="1"/>
</dbReference>
<dbReference type="PROSITE" id="PS00135">
    <property type="entry name" value="TRYPSIN_SER"/>
    <property type="match status" value="1"/>
</dbReference>
<dbReference type="PROSITE" id="PS50234">
    <property type="entry name" value="VWFA"/>
    <property type="match status" value="1"/>
</dbReference>
<organism>
    <name type="scientific">Gorilla gorilla gorilla</name>
    <name type="common">Western lowland gorilla</name>
    <dbReference type="NCBI Taxonomy" id="9595"/>
    <lineage>
        <taxon>Eukaryota</taxon>
        <taxon>Metazoa</taxon>
        <taxon>Chordata</taxon>
        <taxon>Craniata</taxon>
        <taxon>Vertebrata</taxon>
        <taxon>Euteleostomi</taxon>
        <taxon>Mammalia</taxon>
        <taxon>Eutheria</taxon>
        <taxon>Euarchontoglires</taxon>
        <taxon>Primates</taxon>
        <taxon>Haplorrhini</taxon>
        <taxon>Catarrhini</taxon>
        <taxon>Hominidae</taxon>
        <taxon>Gorilla</taxon>
    </lineage>
</organism>
<feature type="signal peptide" evidence="1">
    <location>
        <begin position="1"/>
        <end position="25"/>
    </location>
</feature>
<feature type="chain" id="PRO_0000027542" description="Complement factor B">
    <location>
        <begin position="26"/>
        <end position="764"/>
    </location>
</feature>
<feature type="chain" id="PRO_0000027543" description="Complement factor B Ba">
    <location>
        <begin position="26"/>
        <end position="259"/>
    </location>
</feature>
<feature type="chain" id="PRO_0000027544" description="Complement factor B Bb">
    <location>
        <begin position="260"/>
        <end position="764"/>
    </location>
</feature>
<feature type="domain" description="Sushi 1" evidence="5">
    <location>
        <begin position="35"/>
        <end position="100"/>
    </location>
</feature>
<feature type="domain" description="Sushi 2" evidence="5">
    <location>
        <begin position="101"/>
        <end position="160"/>
    </location>
</feature>
<feature type="domain" description="Sushi 3" evidence="5">
    <location>
        <begin position="163"/>
        <end position="220"/>
    </location>
</feature>
<feature type="domain" description="VWFA" evidence="3">
    <location>
        <begin position="270"/>
        <end position="469"/>
    </location>
</feature>
<feature type="domain" description="Peptidase S1" evidence="4">
    <location>
        <begin position="477"/>
        <end position="757"/>
    </location>
</feature>
<feature type="active site" description="Charge relay system" evidence="4">
    <location>
        <position position="526"/>
    </location>
</feature>
<feature type="active site" description="Charge relay system" evidence="4">
    <location>
        <position position="576"/>
    </location>
</feature>
<feature type="active site" description="Charge relay system" evidence="4">
    <location>
        <position position="699"/>
    </location>
</feature>
<feature type="binding site" evidence="1">
    <location>
        <position position="278"/>
    </location>
    <ligand>
        <name>Mg(2+)</name>
        <dbReference type="ChEBI" id="CHEBI:18420"/>
    </ligand>
</feature>
<feature type="binding site" evidence="1">
    <location>
        <position position="280"/>
    </location>
    <ligand>
        <name>Mg(2+)</name>
        <dbReference type="ChEBI" id="CHEBI:18420"/>
    </ligand>
</feature>
<feature type="binding site" evidence="1">
    <location>
        <position position="353"/>
    </location>
    <ligand>
        <name>Mg(2+)</name>
        <dbReference type="ChEBI" id="CHEBI:18420"/>
    </ligand>
</feature>
<feature type="site" description="Cleavage; by CFD" evidence="1">
    <location>
        <begin position="259"/>
        <end position="260"/>
    </location>
</feature>
<feature type="glycosylation site" description="N-linked (GlcNAc...) asparagine" evidence="2">
    <location>
        <position position="122"/>
    </location>
</feature>
<feature type="glycosylation site" description="N-linked (GlcNAc...) asparagine" evidence="2">
    <location>
        <position position="142"/>
    </location>
</feature>
<feature type="glycosylation site" description="N-linked (GlcNAc...) asparagine" evidence="2">
    <location>
        <position position="285"/>
    </location>
</feature>
<feature type="glycosylation site" description="N-linked (GlcNAc...) asparagine" evidence="2">
    <location>
        <position position="378"/>
    </location>
</feature>
<feature type="disulfide bond" evidence="4">
    <location>
        <begin position="37"/>
        <end position="76"/>
    </location>
</feature>
<feature type="disulfide bond" evidence="4">
    <location>
        <begin position="62"/>
        <end position="98"/>
    </location>
</feature>
<feature type="disulfide bond" evidence="4">
    <location>
        <begin position="103"/>
        <end position="145"/>
    </location>
</feature>
<feature type="disulfide bond" evidence="4">
    <location>
        <begin position="131"/>
        <end position="158"/>
    </location>
</feature>
<feature type="disulfide bond" evidence="4">
    <location>
        <begin position="165"/>
        <end position="205"/>
    </location>
</feature>
<feature type="disulfide bond" evidence="4">
    <location>
        <begin position="191"/>
        <end position="218"/>
    </location>
</feature>
<feature type="disulfide bond" evidence="1">
    <location>
        <begin position="478"/>
        <end position="596"/>
    </location>
</feature>
<feature type="disulfide bond" evidence="4">
    <location>
        <begin position="511"/>
        <end position="527"/>
    </location>
</feature>
<feature type="disulfide bond" evidence="1">
    <location>
        <begin position="599"/>
        <end position="615"/>
    </location>
</feature>
<feature type="disulfide bond" evidence="1">
    <location>
        <begin position="656"/>
        <end position="682"/>
    </location>
</feature>
<feature type="disulfide bond" evidence="4">
    <location>
        <begin position="695"/>
        <end position="725"/>
    </location>
</feature>
<protein>
    <recommendedName>
        <fullName>Complement factor B</fullName>
        <ecNumber evidence="1">3.4.21.47</ecNumber>
    </recommendedName>
    <alternativeName>
        <fullName>C3/C5 convertase</fullName>
    </alternativeName>
    <component>
        <recommendedName>
            <fullName>Complement factor B Ba</fullName>
        </recommendedName>
    </component>
    <component>
        <recommendedName>
            <fullName>Complement factor B Bb</fullName>
        </recommendedName>
    </component>
</protein>
<accession>Q864V9</accession>
<gene>
    <name type="primary">CFB</name>
    <name type="synonym">BF</name>
</gene>
<sequence>MGSNLSPQLCLMPFILGLLSGGVTTTPWSLARPQGSCSLEGVEIKGGSFRLLQEGQALEYVCPSGFYPYPVQTRTCRSTGSWSTLKTQDQKTVRKAECRAIHCPRPHDFENGEYWPRSPYYNVSDEISFHCYDGYTLRGSANRTCQVNGRWSGQTAICDNGAGYCSNPGIPIGTRKVGSQYRLEDSVTYHCSRGLTLRGSQRRTCQEGGSWSGTEPSCQDSFMYDTPQEVAEAFLSSLTETIEGVDAEDGHGPGEQQKRKIVLDPSGSMNIYLVLDGSDSIGASNFTGAKKCLVNLIEKVASYGVKPRYGLVTYATYPKIWVKVSDPDSSNADWVTKQLNEINYEDHKLKSGTNTKKALQAVYSMMSWPDDVPPEGWNRTRHVIILMTDGLHNMGGDPITVIDEIRDLLYIGKDHKNPREDYLDVYVFGVGPLVNQVNINALASKKDNEQHVFKVKDMENLEDVFYQMIDESQSLSLCGMVWEHRKGTDYHKQPWQAKISVIRPSKGHESCMGAVVSEYFVLTAAHCFTVDDKEHSIKVSVGGEKRDLEIEVVLFHPNYNINGKKEAGIPEFYDYDVALIKLKNKLKYGQTIRPICLPCTEGTTRALRLPPTTTCQQQKEELLPAQDIKALFVSEEEKKLTRKEVYIKNGDKKGSCERDAQYAPGYDKVKDISEVVTPRFLCTGGVSPYADPNTCRGDSGGPLIVHKRSRFIQVGVISWGVVDVCKNQKRQKQVPAHARDFHINLFQVLPWLKEKLQDEDLGFL</sequence>
<comment type="function">
    <text evidence="1">Precursor of the catalytic component of the C3 and C5 convertase complexes of the alternative pathway of the complement system, a cascade of proteins that leads to phagocytosis and breakdown of pathogens and signaling that strengthens the adaptive immune system. The alternative complement pathway acts as an amplification loop that enhances other complement pathways (classical, lectin and GZMK) by promoting formation of additional C3 and C5 convertases. CFB is cleaved and activated by CFD to generate Ba and Bb chains; Bb chain constituting the catalytic component of the C3 and C5 convertases.</text>
</comment>
<comment type="function">
    <molecule>Complement factor B Bb</molecule>
    <text evidence="1">Serine protease component of the complement C3 and C5 convertase complexes of the alternative complement pathway. Following cleavage and activation by factor D (CFD), forms the C3 convertase together with complement C3b. As part of the C3 convertase, cleaves and activates C3 into C3a anaphylatoxin and C3b opsonin, the next components of the complement pathways. When an additional complement C3b molecule binds to the C3 convertase, forms the C5 convertase, which cleaves and activates C5 into C5a anaphylatoxin and C5b component of the membrane attack complex.</text>
</comment>
<comment type="function">
    <molecule>Complement factor B Ba</molecule>
    <text evidence="1">Involved in proliferation and differentiation of preactivated B-lymphocytes, rapid spreading of peripheral blood monocytes, stimulation of lymphocyte blastogenesis and lysis of erythrocytes.</text>
</comment>
<comment type="catalytic activity">
    <molecule>Complement factor B Bb</molecule>
    <reaction evidence="1">
        <text>Cleavage of Arg-|-Ser bond in complement component C3 alpha-chain to yield C3a and C3b, and Arg-|-Xaa bond in complement component C5 alpha-chain to yield C5a and C5b.</text>
        <dbReference type="EC" id="3.4.21.47"/>
    </reaction>
</comment>
<comment type="cofactor">
    <molecule>Complement factor B Bb</molecule>
    <cofactor evidence="1">
        <name>Mg(2+)</name>
        <dbReference type="ChEBI" id="CHEBI:18420"/>
    </cofactor>
    <cofactor evidence="1">
        <name>Mn(2+)</name>
        <dbReference type="ChEBI" id="CHEBI:29035"/>
    </cofactor>
</comment>
<comment type="subunit">
    <text evidence="1">Monomer. Interacts with complement C3b; this interaction is dependent on the presence of Mg(2+).</text>
</comment>
<comment type="subunit">
    <molecule>Complement factor B Bb</molecule>
    <text evidence="1">Catalytic component of the C3 convertase of the alternative complement pathway, also named C3bBb, composed of complement factor B Bb and complement C3b. Catalytic component of the C5 convertase of the alternative complement pathway, also named C3bBb3b, composed of complement factor B Bb and additional molecules of complement C3b. Interacts to CFP; this interaction contributes to the stabilization of the active C3-convertase enzyme complex.</text>
</comment>
<comment type="subcellular location">
    <subcellularLocation>
        <location evidence="1">Secreted</location>
    </subcellularLocation>
</comment>
<comment type="subcellular location">
    <molecule>Complement factor B Bb</molecule>
    <subcellularLocation>
        <location evidence="1">Cell surface</location>
    </subcellularLocation>
    <text evidence="1">Recruited to the surface of pathogens by complement C3b opsonin.</text>
</comment>
<comment type="domain">
    <text evidence="1">The unliganded VWA domain has an inactive 'locked' conformation whereby the scissile Arg-259|Lys-260 bond is protected from proteolytic activation.</text>
</comment>
<comment type="PTM">
    <text evidence="1">Cleaved by CFD following activation of the alternative complement system, generating Ba and Bb chains. Cleavage and activation takes place when CFB is already associated with complement C3b.</text>
</comment>
<comment type="similarity">
    <text evidence="4">Belongs to the peptidase S1 family.</text>
</comment>
<keyword id="KW-0165">Cleavage on pair of basic residues</keyword>
<keyword id="KW-0179">Complement alternate pathway</keyword>
<keyword id="KW-1015">Disulfide bond</keyword>
<keyword id="KW-0325">Glycoprotein</keyword>
<keyword id="KW-0378">Hydrolase</keyword>
<keyword id="KW-0391">Immunity</keyword>
<keyword id="KW-0399">Innate immunity</keyword>
<keyword id="KW-0460">Magnesium</keyword>
<keyword id="KW-0479">Metal-binding</keyword>
<keyword id="KW-0645">Protease</keyword>
<keyword id="KW-1185">Reference proteome</keyword>
<keyword id="KW-0677">Repeat</keyword>
<keyword id="KW-0964">Secreted</keyword>
<keyword id="KW-0720">Serine protease</keyword>
<keyword id="KW-0732">Signal</keyword>
<keyword id="KW-0768">Sushi</keyword>
<keyword id="KW-0865">Zymogen</keyword>
<evidence type="ECO:0000250" key="1">
    <source>
        <dbReference type="UniProtKB" id="P00751"/>
    </source>
</evidence>
<evidence type="ECO:0000255" key="2"/>
<evidence type="ECO:0000255" key="3">
    <source>
        <dbReference type="PROSITE-ProRule" id="PRU00219"/>
    </source>
</evidence>
<evidence type="ECO:0000255" key="4">
    <source>
        <dbReference type="PROSITE-ProRule" id="PRU00274"/>
    </source>
</evidence>
<evidence type="ECO:0000255" key="5">
    <source>
        <dbReference type="PROSITE-ProRule" id="PRU00302"/>
    </source>
</evidence>
<name>CFAB_GORGO</name>
<proteinExistence type="inferred from homology"/>